<sequence length="318" mass="35249">MKQRNVNRVALIGAGSVGSSYAFALLNQSITEELVIIDLNENKAMGDAMDLNHGKVFAPNPTKTWYGTYSDCKDADIVCICAGANQKPGETRLDLVEKNLRIFKGIVEEIMASGFDGIFLIATNPVDILTYATWKFSGLPKERIIGSGTILDTGRFRFLLGEYFDIAPANVHAYIIGEHGDTELPVWSHADIGGISITELIKRNPEYTMKDLDELFINVRDAAYQIIEKKGATFYGIAMGLARITKAILNNENSVLTVSTYLDGEYGTEDVYMGVPAVVNRNGIREIVELTLNEQERQQFKHSANVLKEILAPNFKEQ</sequence>
<comment type="function">
    <text evidence="1">Catalyzes the conversion of lactate to pyruvate.</text>
</comment>
<comment type="catalytic activity">
    <reaction evidence="1">
        <text>(S)-lactate + NAD(+) = pyruvate + NADH + H(+)</text>
        <dbReference type="Rhea" id="RHEA:23444"/>
        <dbReference type="ChEBI" id="CHEBI:15361"/>
        <dbReference type="ChEBI" id="CHEBI:15378"/>
        <dbReference type="ChEBI" id="CHEBI:16651"/>
        <dbReference type="ChEBI" id="CHEBI:57540"/>
        <dbReference type="ChEBI" id="CHEBI:57945"/>
        <dbReference type="EC" id="1.1.1.27"/>
    </reaction>
</comment>
<comment type="activity regulation">
    <text evidence="1">Allosterically activated by fructose 1,6-bisphosphate (FBP).</text>
</comment>
<comment type="pathway">
    <text evidence="1">Fermentation; pyruvate fermentation to lactate; (S)-lactate from pyruvate: step 1/1.</text>
</comment>
<comment type="subunit">
    <text evidence="1">Homotetramer.</text>
</comment>
<comment type="subcellular location">
    <subcellularLocation>
        <location evidence="1">Cytoplasm</location>
    </subcellularLocation>
</comment>
<comment type="similarity">
    <text evidence="1 3">Belongs to the LDH/MDH superfamily. LDH family.</text>
</comment>
<proteinExistence type="evidence at protein level"/>
<keyword id="KW-0021">Allosteric enzyme</keyword>
<keyword id="KW-0963">Cytoplasm</keyword>
<keyword id="KW-0903">Direct protein sequencing</keyword>
<keyword id="KW-0520">NAD</keyword>
<keyword id="KW-0560">Oxidoreductase</keyword>
<keyword id="KW-0597">Phosphoprotein</keyword>
<accession>P14561</accession>
<gene>
    <name evidence="1" type="primary">ldh1</name>
    <name type="synonym">lctA</name>
    <name evidence="2" type="synonym">ldhP</name>
</gene>
<reference key="1">
    <citation type="journal article" date="1990" name="Biol. Chem. Hoppe-Seyler">
        <title>Structure and function of L-lactate dehydrogenases from thermophilic, mesophilic and psychrophilic bacteria, IX. Identification, isolation and nucleotide sequence of two L-lactate dehydrogenase genes of the psychrophilic bacterium Bacillus psychrosaccharolyticus.</title>
        <authorList>
            <person name="Vckovski V."/>
            <person name="Schlatter D."/>
            <person name="Zuber H."/>
        </authorList>
    </citation>
    <scope>NUCLEOTIDE SEQUENCE [GENOMIC DNA]</scope>
</reference>
<reference key="2">
    <citation type="journal article" date="1987" name="Biol. Chem. Hoppe-Seyler">
        <title>The primary structure of the psychrophilic lactate dehydrogenase from Bacillus psychrosaccharolyticus.</title>
        <authorList>
            <person name="Schlatter D."/>
            <person name="Kriech O."/>
            <person name="Suter F."/>
            <person name="Zuber H."/>
        </authorList>
    </citation>
    <scope>PROTEIN SEQUENCE</scope>
</reference>
<evidence type="ECO:0000255" key="1">
    <source>
        <dbReference type="HAMAP-Rule" id="MF_00488"/>
    </source>
</evidence>
<evidence type="ECO:0000303" key="2">
    <source>
    </source>
</evidence>
<evidence type="ECO:0000305" key="3"/>
<protein>
    <recommendedName>
        <fullName evidence="1">L-lactate dehydrogenase 1</fullName>
        <shortName evidence="1">L-LDH 1</shortName>
        <ecNumber evidence="1">1.1.1.27</ecNumber>
    </recommendedName>
    <alternativeName>
        <fullName evidence="2">L-lactate dehydrogenase P</fullName>
        <shortName evidence="2">L-LDH P</shortName>
    </alternativeName>
</protein>
<feature type="chain" id="PRO_0000168326" description="L-lactate dehydrogenase 1">
    <location>
        <begin position="1"/>
        <end position="318"/>
    </location>
</feature>
<feature type="active site" description="Proton acceptor" evidence="1">
    <location>
        <position position="179"/>
    </location>
</feature>
<feature type="binding site" evidence="1">
    <location>
        <position position="17"/>
    </location>
    <ligand>
        <name>NAD(+)</name>
        <dbReference type="ChEBI" id="CHEBI:57540"/>
    </ligand>
</feature>
<feature type="binding site" evidence="1">
    <location>
        <position position="38"/>
    </location>
    <ligand>
        <name>NAD(+)</name>
        <dbReference type="ChEBI" id="CHEBI:57540"/>
    </ligand>
</feature>
<feature type="binding site" evidence="1">
    <location>
        <position position="43"/>
    </location>
    <ligand>
        <name>NAD(+)</name>
        <dbReference type="ChEBI" id="CHEBI:57540"/>
    </ligand>
</feature>
<feature type="binding site" evidence="1">
    <location>
        <position position="69"/>
    </location>
    <ligand>
        <name>NAD(+)</name>
        <dbReference type="ChEBI" id="CHEBI:57540"/>
    </ligand>
</feature>
<feature type="binding site" evidence="1">
    <location>
        <begin position="83"/>
        <end position="84"/>
    </location>
    <ligand>
        <name>NAD(+)</name>
        <dbReference type="ChEBI" id="CHEBI:57540"/>
    </ligand>
</feature>
<feature type="binding site" evidence="1">
    <location>
        <position position="86"/>
    </location>
    <ligand>
        <name>substrate</name>
    </ligand>
</feature>
<feature type="binding site" evidence="1">
    <location>
        <position position="92"/>
    </location>
    <ligand>
        <name>substrate</name>
    </ligand>
</feature>
<feature type="binding site" evidence="1">
    <location>
        <begin position="122"/>
        <end position="124"/>
    </location>
    <ligand>
        <name>NAD(+)</name>
        <dbReference type="ChEBI" id="CHEBI:57540"/>
    </ligand>
</feature>
<feature type="binding site" evidence="1">
    <location>
        <begin position="124"/>
        <end position="127"/>
    </location>
    <ligand>
        <name>substrate</name>
    </ligand>
</feature>
<feature type="binding site" evidence="1">
    <location>
        <position position="147"/>
    </location>
    <ligand>
        <name>NAD(+)</name>
        <dbReference type="ChEBI" id="CHEBI:57540"/>
    </ligand>
</feature>
<feature type="binding site" evidence="1">
    <location>
        <begin position="152"/>
        <end position="155"/>
    </location>
    <ligand>
        <name>substrate</name>
    </ligand>
</feature>
<feature type="binding site" evidence="1">
    <location>
        <position position="157"/>
    </location>
    <ligand>
        <name>beta-D-fructose 1,6-bisphosphate</name>
        <dbReference type="ChEBI" id="CHEBI:32966"/>
        <note>allosteric activator</note>
    </ligand>
</feature>
<feature type="binding site" evidence="1">
    <location>
        <position position="172"/>
    </location>
    <ligand>
        <name>beta-D-fructose 1,6-bisphosphate</name>
        <dbReference type="ChEBI" id="CHEBI:32966"/>
        <note>allosteric activator</note>
    </ligand>
</feature>
<feature type="binding site" evidence="1">
    <location>
        <position position="233"/>
    </location>
    <ligand>
        <name>substrate</name>
    </ligand>
</feature>
<feature type="modified residue" description="Phosphotyrosine" evidence="1">
    <location>
        <position position="224"/>
    </location>
</feature>
<organism>
    <name type="scientific">Peribacillus psychrosaccharolyticus</name>
    <name type="common">Bacillus psychrosaccharolyticus</name>
    <dbReference type="NCBI Taxonomy" id="1407"/>
    <lineage>
        <taxon>Bacteria</taxon>
        <taxon>Bacillati</taxon>
        <taxon>Bacillota</taxon>
        <taxon>Bacilli</taxon>
        <taxon>Bacillales</taxon>
        <taxon>Bacillaceae</taxon>
        <taxon>Peribacillus</taxon>
    </lineage>
</organism>
<name>LDH1_PERPY</name>
<dbReference type="EC" id="1.1.1.27" evidence="1"/>
<dbReference type="EMBL" id="X55118">
    <property type="protein sequence ID" value="CAA38914.1"/>
    <property type="molecule type" value="Genomic_DNA"/>
</dbReference>
<dbReference type="PIR" id="S08182">
    <property type="entry name" value="S08182"/>
</dbReference>
<dbReference type="RefSeq" id="WP_040374320.1">
    <property type="nucleotide sequence ID" value="NZ_JARSPG010000005.1"/>
</dbReference>
<dbReference type="SMR" id="P14561"/>
<dbReference type="UniPathway" id="UPA00554">
    <property type="reaction ID" value="UER00611"/>
</dbReference>
<dbReference type="GO" id="GO:0005737">
    <property type="term" value="C:cytoplasm"/>
    <property type="evidence" value="ECO:0007669"/>
    <property type="project" value="UniProtKB-SubCell"/>
</dbReference>
<dbReference type="GO" id="GO:0004459">
    <property type="term" value="F:L-lactate dehydrogenase activity"/>
    <property type="evidence" value="ECO:0007669"/>
    <property type="project" value="UniProtKB-UniRule"/>
</dbReference>
<dbReference type="GO" id="GO:0006096">
    <property type="term" value="P:glycolytic process"/>
    <property type="evidence" value="ECO:0007669"/>
    <property type="project" value="UniProtKB-UniRule"/>
</dbReference>
<dbReference type="GO" id="GO:0006089">
    <property type="term" value="P:lactate metabolic process"/>
    <property type="evidence" value="ECO:0007669"/>
    <property type="project" value="TreeGrafter"/>
</dbReference>
<dbReference type="CDD" id="cd05291">
    <property type="entry name" value="HicDH_like"/>
    <property type="match status" value="1"/>
</dbReference>
<dbReference type="FunFam" id="3.40.50.720:FF:000018">
    <property type="entry name" value="Malate dehydrogenase"/>
    <property type="match status" value="1"/>
</dbReference>
<dbReference type="Gene3D" id="3.90.110.10">
    <property type="entry name" value="Lactate dehydrogenase/glycoside hydrolase, family 4, C-terminal"/>
    <property type="match status" value="1"/>
</dbReference>
<dbReference type="Gene3D" id="3.40.50.720">
    <property type="entry name" value="NAD(P)-binding Rossmann-like Domain"/>
    <property type="match status" value="1"/>
</dbReference>
<dbReference type="HAMAP" id="MF_00488">
    <property type="entry name" value="Lactate_dehydrog"/>
    <property type="match status" value="1"/>
</dbReference>
<dbReference type="InterPro" id="IPR001557">
    <property type="entry name" value="L-lactate/malate_DH"/>
</dbReference>
<dbReference type="InterPro" id="IPR011304">
    <property type="entry name" value="L-lactate_DH"/>
</dbReference>
<dbReference type="InterPro" id="IPR018177">
    <property type="entry name" value="L-lactate_DH_AS"/>
</dbReference>
<dbReference type="InterPro" id="IPR022383">
    <property type="entry name" value="Lactate/malate_DH_C"/>
</dbReference>
<dbReference type="InterPro" id="IPR001236">
    <property type="entry name" value="Lactate/malate_DH_N"/>
</dbReference>
<dbReference type="InterPro" id="IPR015955">
    <property type="entry name" value="Lactate_DH/Glyco_Ohase_4_C"/>
</dbReference>
<dbReference type="InterPro" id="IPR036291">
    <property type="entry name" value="NAD(P)-bd_dom_sf"/>
</dbReference>
<dbReference type="NCBIfam" id="TIGR01771">
    <property type="entry name" value="L-LDH-NAD"/>
    <property type="match status" value="1"/>
</dbReference>
<dbReference type="NCBIfam" id="NF000824">
    <property type="entry name" value="PRK00066.1"/>
    <property type="match status" value="1"/>
</dbReference>
<dbReference type="NCBIfam" id="NF004863">
    <property type="entry name" value="PRK06223.1"/>
    <property type="match status" value="1"/>
</dbReference>
<dbReference type="PANTHER" id="PTHR43128">
    <property type="entry name" value="L-2-HYDROXYCARBOXYLATE DEHYDROGENASE (NAD(P)(+))"/>
    <property type="match status" value="1"/>
</dbReference>
<dbReference type="PANTHER" id="PTHR43128:SF16">
    <property type="entry name" value="L-LACTATE DEHYDROGENASE"/>
    <property type="match status" value="1"/>
</dbReference>
<dbReference type="Pfam" id="PF02866">
    <property type="entry name" value="Ldh_1_C"/>
    <property type="match status" value="1"/>
</dbReference>
<dbReference type="Pfam" id="PF00056">
    <property type="entry name" value="Ldh_1_N"/>
    <property type="match status" value="1"/>
</dbReference>
<dbReference type="PIRSF" id="PIRSF000102">
    <property type="entry name" value="Lac_mal_DH"/>
    <property type="match status" value="1"/>
</dbReference>
<dbReference type="PRINTS" id="PR00086">
    <property type="entry name" value="LLDHDRGNASE"/>
</dbReference>
<dbReference type="SUPFAM" id="SSF56327">
    <property type="entry name" value="LDH C-terminal domain-like"/>
    <property type="match status" value="1"/>
</dbReference>
<dbReference type="SUPFAM" id="SSF51735">
    <property type="entry name" value="NAD(P)-binding Rossmann-fold domains"/>
    <property type="match status" value="1"/>
</dbReference>
<dbReference type="PROSITE" id="PS00064">
    <property type="entry name" value="L_LDH"/>
    <property type="match status" value="1"/>
</dbReference>